<gene>
    <name type="primary">DRD1</name>
</gene>
<sequence>MRTLNTSTMDGTGLVVERDFSFRILTACFLSLLILSTLLGNTLVCAAVIRFRHLRSKVTNFFVISLAVSDLLVAVLVMPWKAVAEIAGFWPFGSFCNIWVAFDIMCSTASILNLCVISVDRYWAISSPFRYERKMTPKAAFILISVAWTLSVLISFIPVQLSWHKAKPTSPSDGNVTSLGKTTHNCDSSLSRTYAISSSLISFYIPVAIMIVTYTRIYRIAQKQIRRISALERAAVHAKNCQTTAGNGNPAECSQPESSFKMSFKRETKVLKTLSVIMGVFVCCWLPFFILNCMVPFCGSGETKPFCIDSITFDVFVWFGWANSSLNPIIYAFNADFRKAFSTLLGCYRLCPTSTNAIETVSINNNGAVVFSSHHEPRGSISKDCNLVYLIPHAVGSSEDLKKEEAGGIASPLEKLSPALSVILDYDTDVSLEKIQPITQNGQHPT</sequence>
<protein>
    <recommendedName>
        <fullName>D(1A) dopamine receptor</fullName>
    </recommendedName>
    <alternativeName>
        <fullName>Dopamine D1 receptor</fullName>
    </alternativeName>
</protein>
<keyword id="KW-1003">Cell membrane</keyword>
<keyword id="KW-0966">Cell projection</keyword>
<keyword id="KW-1015">Disulfide bond</keyword>
<keyword id="KW-0256">Endoplasmic reticulum</keyword>
<keyword id="KW-0297">G-protein coupled receptor</keyword>
<keyword id="KW-0325">Glycoprotein</keyword>
<keyword id="KW-0449">Lipoprotein</keyword>
<keyword id="KW-0472">Membrane</keyword>
<keyword id="KW-0564">Palmitate</keyword>
<keyword id="KW-0675">Receptor</keyword>
<keyword id="KW-1185">Reference proteome</keyword>
<keyword id="KW-0770">Synapse</keyword>
<keyword id="KW-0807">Transducer</keyword>
<keyword id="KW-0812">Transmembrane</keyword>
<keyword id="KW-1133">Transmembrane helix</keyword>
<dbReference type="EMBL" id="U25681">
    <property type="protein sequence ID" value="AAA79848.1"/>
    <property type="molecule type" value="Genomic_DNA"/>
</dbReference>
<dbReference type="PIR" id="I47217">
    <property type="entry name" value="I47217"/>
</dbReference>
<dbReference type="RefSeq" id="NP_001116580.1">
    <property type="nucleotide sequence ID" value="NM_001123108.1"/>
</dbReference>
<dbReference type="SMR" id="P50130"/>
<dbReference type="FunCoup" id="P50130">
    <property type="interactions" value="295"/>
</dbReference>
<dbReference type="STRING" id="9823.ENSSSCP00000020447"/>
<dbReference type="BindingDB" id="P50130"/>
<dbReference type="ChEMBL" id="CHEMBL5067"/>
<dbReference type="DrugCentral" id="P50130"/>
<dbReference type="GlyCosmos" id="P50130">
    <property type="glycosylation" value="1 site, No reported glycans"/>
</dbReference>
<dbReference type="GlyGen" id="P50130">
    <property type="glycosylation" value="1 site"/>
</dbReference>
<dbReference type="PaxDb" id="9823-ENSSSCP00000020447"/>
<dbReference type="GeneID" id="100144487"/>
<dbReference type="KEGG" id="ssc:100144487"/>
<dbReference type="CTD" id="1812"/>
<dbReference type="eggNOG" id="KOG3656">
    <property type="taxonomic scope" value="Eukaryota"/>
</dbReference>
<dbReference type="InParanoid" id="P50130"/>
<dbReference type="OrthoDB" id="6021915at2759"/>
<dbReference type="PRO" id="PR:P50130"/>
<dbReference type="Proteomes" id="UP000008227">
    <property type="component" value="Unplaced"/>
</dbReference>
<dbReference type="Proteomes" id="UP000314985">
    <property type="component" value="Unplaced"/>
</dbReference>
<dbReference type="Proteomes" id="UP000694570">
    <property type="component" value="Unplaced"/>
</dbReference>
<dbReference type="Proteomes" id="UP000694571">
    <property type="component" value="Unplaced"/>
</dbReference>
<dbReference type="Proteomes" id="UP000694720">
    <property type="component" value="Unplaced"/>
</dbReference>
<dbReference type="Proteomes" id="UP000694722">
    <property type="component" value="Unplaced"/>
</dbReference>
<dbReference type="Proteomes" id="UP000694723">
    <property type="component" value="Unplaced"/>
</dbReference>
<dbReference type="Proteomes" id="UP000694724">
    <property type="component" value="Unplaced"/>
</dbReference>
<dbReference type="Proteomes" id="UP000694725">
    <property type="component" value="Unplaced"/>
</dbReference>
<dbReference type="Proteomes" id="UP000694726">
    <property type="component" value="Unplaced"/>
</dbReference>
<dbReference type="Proteomes" id="UP000694727">
    <property type="component" value="Unplaced"/>
</dbReference>
<dbReference type="Proteomes" id="UP000694728">
    <property type="component" value="Unplaced"/>
</dbReference>
<dbReference type="GO" id="GO:0060170">
    <property type="term" value="C:ciliary membrane"/>
    <property type="evidence" value="ECO:0007669"/>
    <property type="project" value="UniProtKB-SubCell"/>
</dbReference>
<dbReference type="GO" id="GO:0043197">
    <property type="term" value="C:dendritic spine"/>
    <property type="evidence" value="ECO:0000250"/>
    <property type="project" value="UniProtKB"/>
</dbReference>
<dbReference type="GO" id="GO:0005789">
    <property type="term" value="C:endoplasmic reticulum membrane"/>
    <property type="evidence" value="ECO:0007669"/>
    <property type="project" value="UniProtKB-SubCell"/>
</dbReference>
<dbReference type="GO" id="GO:0005886">
    <property type="term" value="C:plasma membrane"/>
    <property type="evidence" value="ECO:0000318"/>
    <property type="project" value="GO_Central"/>
</dbReference>
<dbReference type="GO" id="GO:0001588">
    <property type="term" value="F:dopamine neurotransmitter receptor activity, coupled via Gs"/>
    <property type="evidence" value="ECO:0000318"/>
    <property type="project" value="GO_Central"/>
</dbReference>
<dbReference type="GO" id="GO:0004930">
    <property type="term" value="F:G protein-coupled receptor activity"/>
    <property type="evidence" value="ECO:0000318"/>
    <property type="project" value="GO_Central"/>
</dbReference>
<dbReference type="GO" id="GO:0071880">
    <property type="term" value="P:adenylate cyclase-activating adrenergic receptor signaling pathway"/>
    <property type="evidence" value="ECO:0000318"/>
    <property type="project" value="GO_Central"/>
</dbReference>
<dbReference type="GO" id="GO:0007212">
    <property type="term" value="P:G protein-coupled dopamine receptor signaling pathway"/>
    <property type="evidence" value="ECO:0000318"/>
    <property type="project" value="GO_Central"/>
</dbReference>
<dbReference type="GO" id="GO:0043410">
    <property type="term" value="P:positive regulation of MAPK cascade"/>
    <property type="evidence" value="ECO:0000318"/>
    <property type="project" value="GO_Central"/>
</dbReference>
<dbReference type="GO" id="GO:0042311">
    <property type="term" value="P:vasodilation"/>
    <property type="evidence" value="ECO:0007669"/>
    <property type="project" value="InterPro"/>
</dbReference>
<dbReference type="CDD" id="cd15320">
    <property type="entry name" value="7tmA_D1A_dopamine_R"/>
    <property type="match status" value="1"/>
</dbReference>
<dbReference type="FunFam" id="1.20.1070.10:FF:000045">
    <property type="entry name" value="D(1A) dopamine receptor"/>
    <property type="match status" value="1"/>
</dbReference>
<dbReference type="Gene3D" id="1.20.1070.10">
    <property type="entry name" value="Rhodopsin 7-helix transmembrane proteins"/>
    <property type="match status" value="1"/>
</dbReference>
<dbReference type="InterPro" id="IPR001413">
    <property type="entry name" value="Dopamine_D1_rcpt"/>
</dbReference>
<dbReference type="InterPro" id="IPR000929">
    <property type="entry name" value="Dopamine_rcpt"/>
</dbReference>
<dbReference type="InterPro" id="IPR000276">
    <property type="entry name" value="GPCR_Rhodpsn"/>
</dbReference>
<dbReference type="InterPro" id="IPR017452">
    <property type="entry name" value="GPCR_Rhodpsn_7TM"/>
</dbReference>
<dbReference type="PANTHER" id="PTHR24248">
    <property type="entry name" value="ADRENERGIC RECEPTOR-RELATED G-PROTEIN COUPLED RECEPTOR"/>
    <property type="match status" value="1"/>
</dbReference>
<dbReference type="PANTHER" id="PTHR24248:SF139">
    <property type="entry name" value="D(1A) DOPAMINE RECEPTOR"/>
    <property type="match status" value="1"/>
</dbReference>
<dbReference type="Pfam" id="PF00001">
    <property type="entry name" value="7tm_1"/>
    <property type="match status" value="1"/>
</dbReference>
<dbReference type="PRINTS" id="PR00565">
    <property type="entry name" value="DOPAMINED1AR"/>
</dbReference>
<dbReference type="PRINTS" id="PR00242">
    <property type="entry name" value="DOPAMINER"/>
</dbReference>
<dbReference type="PRINTS" id="PR00237">
    <property type="entry name" value="GPCRRHODOPSN"/>
</dbReference>
<dbReference type="SMART" id="SM01381">
    <property type="entry name" value="7TM_GPCR_Srsx"/>
    <property type="match status" value="1"/>
</dbReference>
<dbReference type="SUPFAM" id="SSF81321">
    <property type="entry name" value="Family A G protein-coupled receptor-like"/>
    <property type="match status" value="1"/>
</dbReference>
<dbReference type="PROSITE" id="PS00237">
    <property type="entry name" value="G_PROTEIN_RECEP_F1_1"/>
    <property type="match status" value="1"/>
</dbReference>
<dbReference type="PROSITE" id="PS50262">
    <property type="entry name" value="G_PROTEIN_RECEP_F1_2"/>
    <property type="match status" value="1"/>
</dbReference>
<comment type="function">
    <text>Dopamine receptor whose activity is mediated by G proteins which activate adenylyl cyclase.</text>
</comment>
<comment type="subunit">
    <text evidence="1 3">Interacts with DNAJC14 via its C-terminus (By similarity). Interacts with DRD2 (By similarity). Interacts with DORIP1 (By similarity).</text>
</comment>
<comment type="subcellular location">
    <subcellularLocation>
        <location evidence="1">Cell membrane</location>
        <topology evidence="1">Multi-pass membrane protein</topology>
    </subcellularLocation>
    <subcellularLocation>
        <location evidence="1">Endoplasmic reticulum membrane</location>
        <topology evidence="1">Multi-pass membrane protein</topology>
    </subcellularLocation>
    <subcellularLocation>
        <location evidence="2">Cell projection</location>
        <location evidence="2">Cilium membrane</location>
        <topology evidence="4">Multi-pass membrane protein</topology>
    </subcellularLocation>
    <subcellularLocation>
        <location evidence="3">Cell projection</location>
        <location evidence="3">Dendrite</location>
    </subcellularLocation>
    <subcellularLocation>
        <location evidence="3">Cell projection</location>
        <location evidence="3">Dendritic spine</location>
    </subcellularLocation>
    <text evidence="1">Transport from the endoplasmic reticulum to the cell surface is regulated by interaction with DNAJC14.</text>
</comment>
<comment type="similarity">
    <text evidence="5">Belongs to the G-protein coupled receptor 1 family.</text>
</comment>
<feature type="chain" id="PRO_0000069376" description="D(1A) dopamine receptor">
    <location>
        <begin position="1"/>
        <end position="446"/>
    </location>
</feature>
<feature type="topological domain" description="Extracellular" evidence="4">
    <location>
        <begin position="1"/>
        <end position="23"/>
    </location>
</feature>
<feature type="transmembrane region" description="Helical; Name=1" evidence="4">
    <location>
        <begin position="24"/>
        <end position="49"/>
    </location>
</feature>
<feature type="topological domain" description="Cytoplasmic" evidence="4">
    <location>
        <begin position="50"/>
        <end position="60"/>
    </location>
</feature>
<feature type="transmembrane region" description="Helical; Name=2" evidence="4">
    <location>
        <begin position="61"/>
        <end position="87"/>
    </location>
</feature>
<feature type="topological domain" description="Extracellular" evidence="4">
    <location>
        <begin position="88"/>
        <end position="96"/>
    </location>
</feature>
<feature type="transmembrane region" description="Helical; Name=3" evidence="4">
    <location>
        <begin position="97"/>
        <end position="119"/>
    </location>
</feature>
<feature type="topological domain" description="Cytoplasmic" evidence="4">
    <location>
        <begin position="120"/>
        <end position="138"/>
    </location>
</feature>
<feature type="transmembrane region" description="Helical; Name=4" evidence="4">
    <location>
        <begin position="139"/>
        <end position="163"/>
    </location>
</feature>
<feature type="topological domain" description="Extracellular" evidence="4">
    <location>
        <begin position="164"/>
        <end position="192"/>
    </location>
</feature>
<feature type="transmembrane region" description="Helical; Name=5" evidence="4">
    <location>
        <begin position="193"/>
        <end position="218"/>
    </location>
</feature>
<feature type="topological domain" description="Cytoplasmic" evidence="4">
    <location>
        <begin position="219"/>
        <end position="272"/>
    </location>
</feature>
<feature type="transmembrane region" description="Helical; Name=6" evidence="4">
    <location>
        <begin position="273"/>
        <end position="299"/>
    </location>
</feature>
<feature type="topological domain" description="Extracellular" evidence="4">
    <location>
        <begin position="300"/>
        <end position="312"/>
    </location>
</feature>
<feature type="transmembrane region" description="Helical; Name=7" evidence="4">
    <location>
        <begin position="313"/>
        <end position="337"/>
    </location>
</feature>
<feature type="topological domain" description="Cytoplasmic" evidence="4">
    <location>
        <begin position="338"/>
        <end position="446"/>
    </location>
</feature>
<feature type="lipid moiety-binding region" description="S-palmitoyl cysteine" evidence="2">
    <location>
        <position position="347"/>
    </location>
</feature>
<feature type="lipid moiety-binding region" description="S-palmitoyl cysteine" evidence="2">
    <location>
        <position position="351"/>
    </location>
</feature>
<feature type="glycosylation site" description="N-linked (GlcNAc...) asparagine" evidence="4">
    <location>
        <position position="5"/>
    </location>
</feature>
<feature type="disulfide bond" evidence="5">
    <location>
        <begin position="96"/>
        <end position="186"/>
    </location>
</feature>
<name>DRD1_PIG</name>
<reference key="1">
    <citation type="journal article" date="1995" name="Am. J. Physiol.">
        <title>Cloning of the porcine D1A dopamine receptor gene expressed in renal epithelial LLC-PK1 cells.</title>
        <authorList>
            <person name="Grenader A.C."/>
            <person name="O'Rourke D.A."/>
            <person name="Healy D.P."/>
        </authorList>
    </citation>
    <scope>NUCLEOTIDE SEQUENCE [GENOMIC DNA]</scope>
</reference>
<organism>
    <name type="scientific">Sus scrofa</name>
    <name type="common">Pig</name>
    <dbReference type="NCBI Taxonomy" id="9823"/>
    <lineage>
        <taxon>Eukaryota</taxon>
        <taxon>Metazoa</taxon>
        <taxon>Chordata</taxon>
        <taxon>Craniata</taxon>
        <taxon>Vertebrata</taxon>
        <taxon>Euteleostomi</taxon>
        <taxon>Mammalia</taxon>
        <taxon>Eutheria</taxon>
        <taxon>Laurasiatheria</taxon>
        <taxon>Artiodactyla</taxon>
        <taxon>Suina</taxon>
        <taxon>Suidae</taxon>
        <taxon>Sus</taxon>
    </lineage>
</organism>
<accession>P50130</accession>
<proteinExistence type="inferred from homology"/>
<evidence type="ECO:0000250" key="1">
    <source>
        <dbReference type="UniProtKB" id="P18901"/>
    </source>
</evidence>
<evidence type="ECO:0000250" key="2">
    <source>
        <dbReference type="UniProtKB" id="P21728"/>
    </source>
</evidence>
<evidence type="ECO:0000250" key="3">
    <source>
        <dbReference type="UniProtKB" id="Q61616"/>
    </source>
</evidence>
<evidence type="ECO:0000255" key="4"/>
<evidence type="ECO:0000255" key="5">
    <source>
        <dbReference type="PROSITE-ProRule" id="PRU00521"/>
    </source>
</evidence>